<keyword id="KW-1185">Reference proteome</keyword>
<protein>
    <recommendedName>
        <fullName evidence="1">UPF0297 protein Cthe_0151</fullName>
    </recommendedName>
</protein>
<dbReference type="EMBL" id="CP000568">
    <property type="protein sequence ID" value="ABN51392.1"/>
    <property type="molecule type" value="Genomic_DNA"/>
</dbReference>
<dbReference type="RefSeq" id="WP_003512188.1">
    <property type="nucleotide sequence ID" value="NC_009012.1"/>
</dbReference>
<dbReference type="SMR" id="A3DBR3"/>
<dbReference type="STRING" id="203119.Cthe_0151"/>
<dbReference type="GeneID" id="35803177"/>
<dbReference type="KEGG" id="cth:Cthe_0151"/>
<dbReference type="eggNOG" id="COG4472">
    <property type="taxonomic scope" value="Bacteria"/>
</dbReference>
<dbReference type="HOGENOM" id="CLU_162466_0_0_9"/>
<dbReference type="OrthoDB" id="9796303at2"/>
<dbReference type="Proteomes" id="UP000002145">
    <property type="component" value="Chromosome"/>
</dbReference>
<dbReference type="HAMAP" id="MF_01507">
    <property type="entry name" value="UPF0297"/>
    <property type="match status" value="1"/>
</dbReference>
<dbReference type="InterPro" id="IPR009309">
    <property type="entry name" value="IreB"/>
</dbReference>
<dbReference type="NCBIfam" id="NF003997">
    <property type="entry name" value="PRK05473.1"/>
    <property type="match status" value="1"/>
</dbReference>
<dbReference type="PANTHER" id="PTHR40067">
    <property type="entry name" value="UPF0297 PROTEIN YRZL"/>
    <property type="match status" value="1"/>
</dbReference>
<dbReference type="PANTHER" id="PTHR40067:SF1">
    <property type="entry name" value="UPF0297 PROTEIN YRZL"/>
    <property type="match status" value="1"/>
</dbReference>
<dbReference type="Pfam" id="PF06135">
    <property type="entry name" value="IreB"/>
    <property type="match status" value="1"/>
</dbReference>
<dbReference type="PIRSF" id="PIRSF037258">
    <property type="entry name" value="DUF965_bac"/>
    <property type="match status" value="1"/>
</dbReference>
<sequence>MSNNETMMFNVEKEKVNEARELLVSVYKALKEKGYNPINQIVGYILSGDPTYITNHLDARSSIRKVERDELLEEILRCYLEECIGKEGSV</sequence>
<evidence type="ECO:0000255" key="1">
    <source>
        <dbReference type="HAMAP-Rule" id="MF_01507"/>
    </source>
</evidence>
<reference key="1">
    <citation type="submission" date="2007-02" db="EMBL/GenBank/DDBJ databases">
        <title>Complete sequence of Clostridium thermocellum ATCC 27405.</title>
        <authorList>
            <consortium name="US DOE Joint Genome Institute"/>
            <person name="Copeland A."/>
            <person name="Lucas S."/>
            <person name="Lapidus A."/>
            <person name="Barry K."/>
            <person name="Detter J.C."/>
            <person name="Glavina del Rio T."/>
            <person name="Hammon N."/>
            <person name="Israni S."/>
            <person name="Dalin E."/>
            <person name="Tice H."/>
            <person name="Pitluck S."/>
            <person name="Chertkov O."/>
            <person name="Brettin T."/>
            <person name="Bruce D."/>
            <person name="Han C."/>
            <person name="Tapia R."/>
            <person name="Gilna P."/>
            <person name="Schmutz J."/>
            <person name="Larimer F."/>
            <person name="Land M."/>
            <person name="Hauser L."/>
            <person name="Kyrpides N."/>
            <person name="Mikhailova N."/>
            <person name="Wu J.H.D."/>
            <person name="Newcomb M."/>
            <person name="Richardson P."/>
        </authorList>
    </citation>
    <scope>NUCLEOTIDE SEQUENCE [LARGE SCALE GENOMIC DNA]</scope>
    <source>
        <strain>ATCC 27405 / DSM 1237 / JCM 9322 / NBRC 103400 / NCIMB 10682 / NRRL B-4536 / VPI 7372</strain>
    </source>
</reference>
<proteinExistence type="inferred from homology"/>
<accession>A3DBR3</accession>
<feature type="chain" id="PRO_0000289300" description="UPF0297 protein Cthe_0151">
    <location>
        <begin position="1"/>
        <end position="90"/>
    </location>
</feature>
<gene>
    <name type="ordered locus">Cthe_0151</name>
</gene>
<name>Y151_ACET2</name>
<organism>
    <name type="scientific">Acetivibrio thermocellus (strain ATCC 27405 / DSM 1237 / JCM 9322 / NBRC 103400 / NCIMB 10682 / NRRL B-4536 / VPI 7372)</name>
    <name type="common">Clostridium thermocellum</name>
    <dbReference type="NCBI Taxonomy" id="203119"/>
    <lineage>
        <taxon>Bacteria</taxon>
        <taxon>Bacillati</taxon>
        <taxon>Bacillota</taxon>
        <taxon>Clostridia</taxon>
        <taxon>Eubacteriales</taxon>
        <taxon>Oscillospiraceae</taxon>
        <taxon>Acetivibrio</taxon>
    </lineage>
</organism>
<comment type="similarity">
    <text evidence="1">Belongs to the UPF0297 family.</text>
</comment>